<feature type="chain" id="PRO_0000107694" description="Nucleotide-binding protein BMA3112">
    <location>
        <begin position="1"/>
        <end position="297"/>
    </location>
</feature>
<feature type="binding site" evidence="1">
    <location>
        <begin position="8"/>
        <end position="15"/>
    </location>
    <ligand>
        <name>ATP</name>
        <dbReference type="ChEBI" id="CHEBI:30616"/>
    </ligand>
</feature>
<feature type="binding site" evidence="1">
    <location>
        <begin position="57"/>
        <end position="60"/>
    </location>
    <ligand>
        <name>GTP</name>
        <dbReference type="ChEBI" id="CHEBI:37565"/>
    </ligand>
</feature>
<name>Y3112_BURMA</name>
<keyword id="KW-0067">ATP-binding</keyword>
<keyword id="KW-0342">GTP-binding</keyword>
<keyword id="KW-0547">Nucleotide-binding</keyword>
<keyword id="KW-1185">Reference proteome</keyword>
<protein>
    <recommendedName>
        <fullName evidence="1">Nucleotide-binding protein BMA3112</fullName>
    </recommendedName>
</protein>
<proteinExistence type="inferred from homology"/>
<comment type="function">
    <text evidence="1">Displays ATPase and GTPase activities.</text>
</comment>
<comment type="similarity">
    <text evidence="1">Belongs to the RapZ-like family.</text>
</comment>
<dbReference type="EMBL" id="CP000010">
    <property type="protein sequence ID" value="AAU48093.1"/>
    <property type="molecule type" value="Genomic_DNA"/>
</dbReference>
<dbReference type="RefSeq" id="YP_104597.1">
    <property type="nucleotide sequence ID" value="NC_006348.1"/>
</dbReference>
<dbReference type="SMR" id="Q62FD0"/>
<dbReference type="KEGG" id="bma:BMA3112"/>
<dbReference type="PATRIC" id="fig|243160.12.peg.3189"/>
<dbReference type="eggNOG" id="COG1660">
    <property type="taxonomic scope" value="Bacteria"/>
</dbReference>
<dbReference type="HOGENOM" id="CLU_059558_1_1_4"/>
<dbReference type="Proteomes" id="UP000006693">
    <property type="component" value="Chromosome 1"/>
</dbReference>
<dbReference type="GO" id="GO:0005524">
    <property type="term" value="F:ATP binding"/>
    <property type="evidence" value="ECO:0007669"/>
    <property type="project" value="UniProtKB-UniRule"/>
</dbReference>
<dbReference type="GO" id="GO:0005525">
    <property type="term" value="F:GTP binding"/>
    <property type="evidence" value="ECO:0007669"/>
    <property type="project" value="UniProtKB-UniRule"/>
</dbReference>
<dbReference type="Gene3D" id="3.40.50.300">
    <property type="entry name" value="P-loop containing nucleotide triphosphate hydrolases"/>
    <property type="match status" value="1"/>
</dbReference>
<dbReference type="HAMAP" id="MF_00636">
    <property type="entry name" value="RapZ_like"/>
    <property type="match status" value="1"/>
</dbReference>
<dbReference type="InterPro" id="IPR027417">
    <property type="entry name" value="P-loop_NTPase"/>
</dbReference>
<dbReference type="InterPro" id="IPR005337">
    <property type="entry name" value="RapZ-like"/>
</dbReference>
<dbReference type="InterPro" id="IPR053930">
    <property type="entry name" value="RapZ-like_N"/>
</dbReference>
<dbReference type="InterPro" id="IPR053931">
    <property type="entry name" value="RapZ_C"/>
</dbReference>
<dbReference type="NCBIfam" id="NF003828">
    <property type="entry name" value="PRK05416.1"/>
    <property type="match status" value="1"/>
</dbReference>
<dbReference type="PANTHER" id="PTHR30448">
    <property type="entry name" value="RNASE ADAPTER PROTEIN RAPZ"/>
    <property type="match status" value="1"/>
</dbReference>
<dbReference type="PANTHER" id="PTHR30448:SF0">
    <property type="entry name" value="RNASE ADAPTER PROTEIN RAPZ"/>
    <property type="match status" value="1"/>
</dbReference>
<dbReference type="Pfam" id="PF22740">
    <property type="entry name" value="PapZ_C"/>
    <property type="match status" value="1"/>
</dbReference>
<dbReference type="Pfam" id="PF03668">
    <property type="entry name" value="RapZ-like_N"/>
    <property type="match status" value="1"/>
</dbReference>
<dbReference type="PIRSF" id="PIRSF005052">
    <property type="entry name" value="P-loopkin"/>
    <property type="match status" value="1"/>
</dbReference>
<dbReference type="SUPFAM" id="SSF52540">
    <property type="entry name" value="P-loop containing nucleoside triphosphate hydrolases"/>
    <property type="match status" value="1"/>
</dbReference>
<reference key="1">
    <citation type="journal article" date="2004" name="Proc. Natl. Acad. Sci. U.S.A.">
        <title>Structural flexibility in the Burkholderia mallei genome.</title>
        <authorList>
            <person name="Nierman W.C."/>
            <person name="DeShazer D."/>
            <person name="Kim H.S."/>
            <person name="Tettelin H."/>
            <person name="Nelson K.E."/>
            <person name="Feldblyum T.V."/>
            <person name="Ulrich R.L."/>
            <person name="Ronning C.M."/>
            <person name="Brinkac L.M."/>
            <person name="Daugherty S.C."/>
            <person name="Davidsen T.D."/>
            <person name="DeBoy R.T."/>
            <person name="Dimitrov G."/>
            <person name="Dodson R.J."/>
            <person name="Durkin A.S."/>
            <person name="Gwinn M.L."/>
            <person name="Haft D.H."/>
            <person name="Khouri H.M."/>
            <person name="Kolonay J.F."/>
            <person name="Madupu R."/>
            <person name="Mohammoud Y."/>
            <person name="Nelson W.C."/>
            <person name="Radune D."/>
            <person name="Romero C.M."/>
            <person name="Sarria S."/>
            <person name="Selengut J."/>
            <person name="Shamblin C."/>
            <person name="Sullivan S.A."/>
            <person name="White O."/>
            <person name="Yu Y."/>
            <person name="Zafar N."/>
            <person name="Zhou L."/>
            <person name="Fraser C.M."/>
        </authorList>
    </citation>
    <scope>NUCLEOTIDE SEQUENCE [LARGE SCALE GENOMIC DNA]</scope>
    <source>
        <strain>ATCC 23344</strain>
    </source>
</reference>
<sequence>MRIVLITGISGSGKSVALNALEDAGYYCVDNLPPHVLPELARYLAHEGQNRLAVAIDARSSASLDEMPGLIRALSHEHDVRVLFLNASTQALIQRFSETRRRHPLSGSPSHDADVGLLVSLEEAIERERELVAPLAEFGHQIDTSNLRANVLRTWVKRFIEQKNDDLVLMFESFGFKRGVPLDADFMFDVRALPNPYYDHELRPLTGLDQPVVAFLDALPVVHQMLDDIETFLVKWLPHFREDNRSYLTVAIGCTGGQHRSVFLAETLAARLSRQASVIVRHRDAPVAVDASSRLVT</sequence>
<accession>Q62FD0</accession>
<evidence type="ECO:0000255" key="1">
    <source>
        <dbReference type="HAMAP-Rule" id="MF_00636"/>
    </source>
</evidence>
<gene>
    <name type="ordered locus">BMA3112</name>
</gene>
<organism>
    <name type="scientific">Burkholderia mallei (strain ATCC 23344)</name>
    <dbReference type="NCBI Taxonomy" id="243160"/>
    <lineage>
        <taxon>Bacteria</taxon>
        <taxon>Pseudomonadati</taxon>
        <taxon>Pseudomonadota</taxon>
        <taxon>Betaproteobacteria</taxon>
        <taxon>Burkholderiales</taxon>
        <taxon>Burkholderiaceae</taxon>
        <taxon>Burkholderia</taxon>
        <taxon>pseudomallei group</taxon>
    </lineage>
</organism>